<evidence type="ECO:0000255" key="1">
    <source>
        <dbReference type="HAMAP-Rule" id="MF_00406"/>
    </source>
</evidence>
<name>FABZ_SYNPW</name>
<accession>A5GN68</accession>
<protein>
    <recommendedName>
        <fullName evidence="1">3-hydroxyacyl-[acyl-carrier-protein] dehydratase FabZ</fullName>
        <ecNumber evidence="1">4.2.1.59</ecNumber>
    </recommendedName>
    <alternativeName>
        <fullName evidence="1">(3R)-hydroxymyristoyl-[acyl-carrier-protein] dehydratase</fullName>
        <shortName evidence="1">(3R)-hydroxymyristoyl-ACP dehydrase</shortName>
    </alternativeName>
    <alternativeName>
        <fullName evidence="1">Beta-hydroxyacyl-ACP dehydratase</fullName>
    </alternativeName>
</protein>
<keyword id="KW-0963">Cytoplasm</keyword>
<keyword id="KW-0441">Lipid A biosynthesis</keyword>
<keyword id="KW-0444">Lipid biosynthesis</keyword>
<keyword id="KW-0443">Lipid metabolism</keyword>
<keyword id="KW-0456">Lyase</keyword>
<keyword id="KW-1185">Reference proteome</keyword>
<comment type="function">
    <text evidence="1">Involved in unsaturated fatty acids biosynthesis. Catalyzes the dehydration of short chain beta-hydroxyacyl-ACPs and long chain saturated and unsaturated beta-hydroxyacyl-ACPs.</text>
</comment>
<comment type="catalytic activity">
    <reaction evidence="1">
        <text>a (3R)-hydroxyacyl-[ACP] = a (2E)-enoyl-[ACP] + H2O</text>
        <dbReference type="Rhea" id="RHEA:13097"/>
        <dbReference type="Rhea" id="RHEA-COMP:9925"/>
        <dbReference type="Rhea" id="RHEA-COMP:9945"/>
        <dbReference type="ChEBI" id="CHEBI:15377"/>
        <dbReference type="ChEBI" id="CHEBI:78784"/>
        <dbReference type="ChEBI" id="CHEBI:78827"/>
        <dbReference type="EC" id="4.2.1.59"/>
    </reaction>
</comment>
<comment type="subcellular location">
    <subcellularLocation>
        <location evidence="1">Cytoplasm</location>
    </subcellularLocation>
</comment>
<comment type="similarity">
    <text evidence="1">Belongs to the thioester dehydratase family. FabZ subfamily.</text>
</comment>
<organism>
    <name type="scientific">Synechococcus sp. (strain WH7803)</name>
    <dbReference type="NCBI Taxonomy" id="32051"/>
    <lineage>
        <taxon>Bacteria</taxon>
        <taxon>Bacillati</taxon>
        <taxon>Cyanobacteriota</taxon>
        <taxon>Cyanophyceae</taxon>
        <taxon>Synechococcales</taxon>
        <taxon>Synechococcaceae</taxon>
        <taxon>Synechococcus</taxon>
    </lineage>
</organism>
<feature type="chain" id="PRO_0000340811" description="3-hydroxyacyl-[acyl-carrier-protein] dehydratase FabZ">
    <location>
        <begin position="1"/>
        <end position="147"/>
    </location>
</feature>
<feature type="active site" evidence="1">
    <location>
        <position position="53"/>
    </location>
</feature>
<gene>
    <name evidence="1" type="primary">fabZ</name>
    <name type="ordered locus">SynWH7803_1957</name>
</gene>
<dbReference type="EC" id="4.2.1.59" evidence="1"/>
<dbReference type="EMBL" id="CT971583">
    <property type="protein sequence ID" value="CAK24383.1"/>
    <property type="molecule type" value="Genomic_DNA"/>
</dbReference>
<dbReference type="SMR" id="A5GN68"/>
<dbReference type="STRING" id="32051.SynWH7803_1957"/>
<dbReference type="KEGG" id="syx:SynWH7803_1957"/>
<dbReference type="eggNOG" id="COG0764">
    <property type="taxonomic scope" value="Bacteria"/>
</dbReference>
<dbReference type="HOGENOM" id="CLU_078912_1_1_3"/>
<dbReference type="Proteomes" id="UP000001566">
    <property type="component" value="Chromosome"/>
</dbReference>
<dbReference type="GO" id="GO:0005737">
    <property type="term" value="C:cytoplasm"/>
    <property type="evidence" value="ECO:0007669"/>
    <property type="project" value="UniProtKB-SubCell"/>
</dbReference>
<dbReference type="GO" id="GO:0016020">
    <property type="term" value="C:membrane"/>
    <property type="evidence" value="ECO:0007669"/>
    <property type="project" value="GOC"/>
</dbReference>
<dbReference type="GO" id="GO:0019171">
    <property type="term" value="F:(3R)-hydroxyacyl-[acyl-carrier-protein] dehydratase activity"/>
    <property type="evidence" value="ECO:0007669"/>
    <property type="project" value="UniProtKB-EC"/>
</dbReference>
<dbReference type="GO" id="GO:0006633">
    <property type="term" value="P:fatty acid biosynthetic process"/>
    <property type="evidence" value="ECO:0007669"/>
    <property type="project" value="UniProtKB-UniRule"/>
</dbReference>
<dbReference type="GO" id="GO:0009245">
    <property type="term" value="P:lipid A biosynthetic process"/>
    <property type="evidence" value="ECO:0007669"/>
    <property type="project" value="UniProtKB-UniRule"/>
</dbReference>
<dbReference type="CDD" id="cd01288">
    <property type="entry name" value="FabZ"/>
    <property type="match status" value="1"/>
</dbReference>
<dbReference type="FunFam" id="3.10.129.10:FF:000001">
    <property type="entry name" value="3-hydroxyacyl-[acyl-carrier-protein] dehydratase FabZ"/>
    <property type="match status" value="1"/>
</dbReference>
<dbReference type="Gene3D" id="3.10.129.10">
    <property type="entry name" value="Hotdog Thioesterase"/>
    <property type="match status" value="1"/>
</dbReference>
<dbReference type="HAMAP" id="MF_00406">
    <property type="entry name" value="FabZ"/>
    <property type="match status" value="1"/>
</dbReference>
<dbReference type="InterPro" id="IPR013114">
    <property type="entry name" value="FabA_FabZ"/>
</dbReference>
<dbReference type="InterPro" id="IPR010084">
    <property type="entry name" value="FabZ"/>
</dbReference>
<dbReference type="InterPro" id="IPR029069">
    <property type="entry name" value="HotDog_dom_sf"/>
</dbReference>
<dbReference type="NCBIfam" id="TIGR01750">
    <property type="entry name" value="fabZ"/>
    <property type="match status" value="1"/>
</dbReference>
<dbReference type="NCBIfam" id="NF000582">
    <property type="entry name" value="PRK00006.1"/>
    <property type="match status" value="1"/>
</dbReference>
<dbReference type="PANTHER" id="PTHR30272">
    <property type="entry name" value="3-HYDROXYACYL-[ACYL-CARRIER-PROTEIN] DEHYDRATASE"/>
    <property type="match status" value="1"/>
</dbReference>
<dbReference type="PANTHER" id="PTHR30272:SF1">
    <property type="entry name" value="3-HYDROXYACYL-[ACYL-CARRIER-PROTEIN] DEHYDRATASE"/>
    <property type="match status" value="1"/>
</dbReference>
<dbReference type="Pfam" id="PF07977">
    <property type="entry name" value="FabA"/>
    <property type="match status" value="1"/>
</dbReference>
<dbReference type="SUPFAM" id="SSF54637">
    <property type="entry name" value="Thioesterase/thiol ester dehydrase-isomerase"/>
    <property type="match status" value="1"/>
</dbReference>
<sequence>MTSQPVLNAEQIMGLLPHRYPFALVDRVLEHVPGEKAVAIKNVTLNEPQFQGHFPDRPLMPGVLIVEAMAQVGGLIVTQMPDLPKGLFVFAGIDGVRFRRPVVPGDQLRISCELLSLKRQRFGKVKAEATVEGQLVCSGELMFSLVD</sequence>
<proteinExistence type="inferred from homology"/>
<reference key="1">
    <citation type="submission" date="2006-05" db="EMBL/GenBank/DDBJ databases">
        <authorList>
            <consortium name="Genoscope"/>
        </authorList>
    </citation>
    <scope>NUCLEOTIDE SEQUENCE [LARGE SCALE GENOMIC DNA]</scope>
    <source>
        <strain>WH7803</strain>
    </source>
</reference>